<sequence>MTAILERRESTSLWGRFCNWITSTENRLYIGWFGVLMIPTLLTATSVFIIAFIAAPPVDIDGIREPVSGSLLYGNNIISGAIIPTSAAIGLHFYPIWEAASVDEWLYNGGPYELIVLHFLLGVACYMGREWELSFRLGMRPWIAVAYSAPVAAATAVFLIYPIGQGSFSDGMPLGISGTFNFMIVFQAEHNILMHPFHMLGVAGVFGGSLFSAMHGSLVTSSLIRETTENESANEGYKFGQEEETYNIVAAHGYFGRLIFQYASFNNSRSLHFFLAAWPVVGIWFTALGISTMAFNLNGFNFNQSVVDSQGRVINTWADIINRANLGMEVMHERNAHNFPLDLAAVEVPAING</sequence>
<feature type="initiator methionine" description="Removed" evidence="1">
    <location>
        <position position="1"/>
    </location>
</feature>
<feature type="chain" id="PRO_0000090445" description="Photosystem II protein D1" evidence="1">
    <location>
        <begin position="2"/>
        <end position="344"/>
    </location>
</feature>
<feature type="propeptide" id="PRO_0000316456" evidence="1">
    <location>
        <begin position="345"/>
        <end position="353"/>
    </location>
</feature>
<feature type="transmembrane region" description="Helical" evidence="1">
    <location>
        <begin position="29"/>
        <end position="46"/>
    </location>
</feature>
<feature type="transmembrane region" description="Helical" evidence="1">
    <location>
        <begin position="118"/>
        <end position="133"/>
    </location>
</feature>
<feature type="transmembrane region" description="Helical" evidence="1">
    <location>
        <begin position="142"/>
        <end position="156"/>
    </location>
</feature>
<feature type="transmembrane region" description="Helical" evidence="1">
    <location>
        <begin position="197"/>
        <end position="218"/>
    </location>
</feature>
<feature type="transmembrane region" description="Helical" evidence="1">
    <location>
        <begin position="274"/>
        <end position="288"/>
    </location>
</feature>
<feature type="binding site" description="axial binding residue" evidence="1">
    <location>
        <position position="118"/>
    </location>
    <ligand>
        <name>chlorophyll a</name>
        <dbReference type="ChEBI" id="CHEBI:58416"/>
        <label>ChlzD1</label>
    </ligand>
    <ligandPart>
        <name>Mg</name>
        <dbReference type="ChEBI" id="CHEBI:25107"/>
    </ligandPart>
</feature>
<feature type="binding site" evidence="1">
    <location>
        <position position="126"/>
    </location>
    <ligand>
        <name>pheophytin a</name>
        <dbReference type="ChEBI" id="CHEBI:136840"/>
        <label>D1</label>
    </ligand>
</feature>
<feature type="binding site" evidence="1">
    <location>
        <position position="170"/>
    </location>
    <ligand>
        <name>[CaMn4O5] cluster</name>
        <dbReference type="ChEBI" id="CHEBI:189552"/>
    </ligand>
</feature>
<feature type="binding site" evidence="1">
    <location>
        <position position="189"/>
    </location>
    <ligand>
        <name>[CaMn4O5] cluster</name>
        <dbReference type="ChEBI" id="CHEBI:189552"/>
    </ligand>
</feature>
<feature type="binding site" description="axial binding residue" evidence="1">
    <location>
        <position position="198"/>
    </location>
    <ligand>
        <name>chlorophyll a</name>
        <dbReference type="ChEBI" id="CHEBI:58416"/>
        <label>PD1</label>
    </ligand>
    <ligandPart>
        <name>Mg</name>
        <dbReference type="ChEBI" id="CHEBI:25107"/>
    </ligandPart>
</feature>
<feature type="binding site" evidence="1">
    <location>
        <position position="215"/>
    </location>
    <ligand>
        <name>a quinone</name>
        <dbReference type="ChEBI" id="CHEBI:132124"/>
        <label>B</label>
    </ligand>
</feature>
<feature type="binding site" evidence="1">
    <location>
        <position position="215"/>
    </location>
    <ligand>
        <name>Fe cation</name>
        <dbReference type="ChEBI" id="CHEBI:24875"/>
        <note>ligand shared with heterodimeric partner</note>
    </ligand>
</feature>
<feature type="binding site" evidence="1">
    <location>
        <begin position="264"/>
        <end position="265"/>
    </location>
    <ligand>
        <name>a quinone</name>
        <dbReference type="ChEBI" id="CHEBI:132124"/>
        <label>B</label>
    </ligand>
</feature>
<feature type="binding site" evidence="1">
    <location>
        <position position="272"/>
    </location>
    <ligand>
        <name>Fe cation</name>
        <dbReference type="ChEBI" id="CHEBI:24875"/>
        <note>ligand shared with heterodimeric partner</note>
    </ligand>
</feature>
<feature type="binding site" evidence="1">
    <location>
        <position position="332"/>
    </location>
    <ligand>
        <name>[CaMn4O5] cluster</name>
        <dbReference type="ChEBI" id="CHEBI:189552"/>
    </ligand>
</feature>
<feature type="binding site" evidence="1">
    <location>
        <position position="333"/>
    </location>
    <ligand>
        <name>[CaMn4O5] cluster</name>
        <dbReference type="ChEBI" id="CHEBI:189552"/>
    </ligand>
</feature>
<feature type="binding site" evidence="1">
    <location>
        <position position="342"/>
    </location>
    <ligand>
        <name>[CaMn4O5] cluster</name>
        <dbReference type="ChEBI" id="CHEBI:189552"/>
    </ligand>
</feature>
<feature type="binding site" evidence="1">
    <location>
        <position position="344"/>
    </location>
    <ligand>
        <name>[CaMn4O5] cluster</name>
        <dbReference type="ChEBI" id="CHEBI:189552"/>
    </ligand>
</feature>
<feature type="site" description="Tyrosine radical intermediate" evidence="1">
    <location>
        <position position="161"/>
    </location>
</feature>
<feature type="site" description="Stabilizes free radical intermediate" evidence="1">
    <location>
        <position position="190"/>
    </location>
</feature>
<feature type="site" description="Cleavage; by CTPA" evidence="1">
    <location>
        <begin position="344"/>
        <end position="345"/>
    </location>
</feature>
<feature type="modified residue" description="N-acetylthreonine" evidence="1">
    <location>
        <position position="2"/>
    </location>
</feature>
<feature type="modified residue" description="Phosphothreonine" evidence="1">
    <location>
        <position position="2"/>
    </location>
</feature>
<gene>
    <name evidence="1" type="primary">psbA</name>
</gene>
<dbReference type="EC" id="1.10.3.9" evidence="1"/>
<dbReference type="EMBL" id="X07521">
    <property type="protein sequence ID" value="CAA30400.1"/>
    <property type="molecule type" value="Genomic_DNA"/>
</dbReference>
<dbReference type="EMBL" id="M38374">
    <property type="protein sequence ID" value="AAA84046.1"/>
    <property type="molecule type" value="Genomic_DNA"/>
</dbReference>
<dbReference type="EMBL" id="X07942">
    <property type="protein sequence ID" value="CAA30763.1"/>
    <property type="molecule type" value="Genomic_DNA"/>
</dbReference>
<dbReference type="EMBL" id="EF115541">
    <property type="protein sequence ID" value="ABK79393.1"/>
    <property type="molecule type" value="Genomic_DNA"/>
</dbReference>
<dbReference type="PIR" id="C31183">
    <property type="entry name" value="C31183"/>
</dbReference>
<dbReference type="PIR" id="S00883">
    <property type="entry name" value="F2BHD1"/>
</dbReference>
<dbReference type="RefSeq" id="YP_010144405.1">
    <property type="nucleotide sequence ID" value="NC_056985.1"/>
</dbReference>
<dbReference type="RefSeq" id="YP_874633.1">
    <property type="nucleotide sequence ID" value="NC_008590.1"/>
</dbReference>
<dbReference type="SMR" id="P05337"/>
<dbReference type="GeneID" id="4525096"/>
<dbReference type="GeneID" id="67140682"/>
<dbReference type="GO" id="GO:0009535">
    <property type="term" value="C:chloroplast thylakoid membrane"/>
    <property type="evidence" value="ECO:0007669"/>
    <property type="project" value="UniProtKB-SubCell"/>
</dbReference>
<dbReference type="GO" id="GO:0009523">
    <property type="term" value="C:photosystem II"/>
    <property type="evidence" value="ECO:0007669"/>
    <property type="project" value="UniProtKB-KW"/>
</dbReference>
<dbReference type="GO" id="GO:0016168">
    <property type="term" value="F:chlorophyll binding"/>
    <property type="evidence" value="ECO:0007669"/>
    <property type="project" value="UniProtKB-UniRule"/>
</dbReference>
<dbReference type="GO" id="GO:0045156">
    <property type="term" value="F:electron transporter, transferring electrons within the cyclic electron transport pathway of photosynthesis activity"/>
    <property type="evidence" value="ECO:0007669"/>
    <property type="project" value="InterPro"/>
</dbReference>
<dbReference type="GO" id="GO:0005506">
    <property type="term" value="F:iron ion binding"/>
    <property type="evidence" value="ECO:0007669"/>
    <property type="project" value="UniProtKB-UniRule"/>
</dbReference>
<dbReference type="GO" id="GO:0016682">
    <property type="term" value="F:oxidoreductase activity, acting on diphenols and related substances as donors, oxygen as acceptor"/>
    <property type="evidence" value="ECO:0007669"/>
    <property type="project" value="UniProtKB-UniRule"/>
</dbReference>
<dbReference type="GO" id="GO:0010242">
    <property type="term" value="F:oxygen evolving activity"/>
    <property type="evidence" value="ECO:0007669"/>
    <property type="project" value="UniProtKB-EC"/>
</dbReference>
<dbReference type="GO" id="GO:0009772">
    <property type="term" value="P:photosynthetic electron transport in photosystem II"/>
    <property type="evidence" value="ECO:0007669"/>
    <property type="project" value="InterPro"/>
</dbReference>
<dbReference type="GO" id="GO:0009635">
    <property type="term" value="P:response to herbicide"/>
    <property type="evidence" value="ECO:0007669"/>
    <property type="project" value="UniProtKB-KW"/>
</dbReference>
<dbReference type="CDD" id="cd09289">
    <property type="entry name" value="Photosystem-II_D1"/>
    <property type="match status" value="1"/>
</dbReference>
<dbReference type="FunFam" id="1.20.85.10:FF:000002">
    <property type="entry name" value="Photosystem II protein D1"/>
    <property type="match status" value="1"/>
</dbReference>
<dbReference type="Gene3D" id="1.20.85.10">
    <property type="entry name" value="Photosystem II protein D1-like"/>
    <property type="match status" value="1"/>
</dbReference>
<dbReference type="HAMAP" id="MF_01379">
    <property type="entry name" value="PSII_PsbA_D1"/>
    <property type="match status" value="1"/>
</dbReference>
<dbReference type="InterPro" id="IPR055266">
    <property type="entry name" value="D1/D2"/>
</dbReference>
<dbReference type="InterPro" id="IPR036854">
    <property type="entry name" value="Photo_II_D1/D2_sf"/>
</dbReference>
<dbReference type="InterPro" id="IPR000484">
    <property type="entry name" value="Photo_RC_L/M"/>
</dbReference>
<dbReference type="InterPro" id="IPR055265">
    <property type="entry name" value="Photo_RC_L/M_CS"/>
</dbReference>
<dbReference type="InterPro" id="IPR005867">
    <property type="entry name" value="PSII_D1"/>
</dbReference>
<dbReference type="NCBIfam" id="TIGR01151">
    <property type="entry name" value="psbA"/>
    <property type="match status" value="1"/>
</dbReference>
<dbReference type="PANTHER" id="PTHR33149">
    <property type="entry name" value="PHOTOSYSTEM II PROTEIN D1"/>
    <property type="match status" value="1"/>
</dbReference>
<dbReference type="PANTHER" id="PTHR33149:SF58">
    <property type="entry name" value="PHOTOSYSTEM II PROTEIN D1"/>
    <property type="match status" value="1"/>
</dbReference>
<dbReference type="Pfam" id="PF00124">
    <property type="entry name" value="Photo_RC"/>
    <property type="match status" value="1"/>
</dbReference>
<dbReference type="PRINTS" id="PR00256">
    <property type="entry name" value="REACTNCENTRE"/>
</dbReference>
<dbReference type="SUPFAM" id="SSF81483">
    <property type="entry name" value="Bacterial photosystem II reaction centre, L and M subunits"/>
    <property type="match status" value="1"/>
</dbReference>
<dbReference type="PROSITE" id="PS00244">
    <property type="entry name" value="REACTION_CENTER"/>
    <property type="match status" value="1"/>
</dbReference>
<proteinExistence type="inferred from homology"/>
<accession>P05337</accession>
<accession>A1E9H1</accession>
<protein>
    <recommendedName>
        <fullName evidence="1">Photosystem II protein D1</fullName>
        <shortName evidence="1">PSII D1 protein</shortName>
        <ecNumber evidence="1">1.10.3.9</ecNumber>
    </recommendedName>
    <alternativeName>
        <fullName evidence="1">Photosystem II Q(B) protein</fullName>
    </alternativeName>
</protein>
<name>PSBA_HORVU</name>
<reference key="1">
    <citation type="journal article" date="1988" name="Nucleic Acids Res.">
        <title>Nucleotide sequence of the barley chloroplast psbA gene for the QB protein of photosystem II.</title>
        <authorList>
            <person name="Efimov V.A."/>
            <person name="Andreeva A.V."/>
            <person name="Reverdatto S.V."/>
            <person name="Jung R."/>
            <person name="Chakhmakhcheva O.G."/>
        </authorList>
    </citation>
    <scope>NUCLEOTIDE SEQUENCE [GENOMIC DNA]</scope>
    <source>
        <strain>cv. Donetsky 6</strain>
    </source>
</reference>
<reference key="2">
    <citation type="journal article" date="1988" name="Bioorg. Khim.">
        <title>Nucleotide sequence of the barley chloroplast DNA psbA gene coding for a herbicide-binding protein.</title>
        <authorList>
            <person name="Efimov V.A."/>
            <person name="Andreeva A.V."/>
            <person name="Dmitrakova E.V."/>
            <person name="Pashkova I.N."/>
            <person name="Reverdatto S.V."/>
            <person name="Jung R."/>
            <person name="Chakhmakhcheva O.G."/>
        </authorList>
    </citation>
    <scope>NUCLEOTIDE SEQUENCE [GENOMIC DNA]</scope>
    <source>
        <strain>cv. Donetsky 6</strain>
    </source>
</reference>
<reference key="3">
    <citation type="journal article" date="1988" name="Nucleic Acids Res.">
        <title>Sequence and transcript map of barley chloroplast psbA gene.</title>
        <authorList>
            <person name="Boyer S.K."/>
            <person name="Mullet J.E."/>
        </authorList>
    </citation>
    <scope>NUCLEOTIDE SEQUENCE [GENOMIC DNA]</scope>
    <source>
        <strain>cv. Morex</strain>
    </source>
</reference>
<reference key="4">
    <citation type="journal article" date="2007" name="Theor. Appl. Genet.">
        <title>Complete chloroplast genome sequences of Hordeum vulgare, Sorghum bicolor and Agrostis stolonifera, and comparative analyses with other grass genomes.</title>
        <authorList>
            <person name="Saski C."/>
            <person name="Lee S.-B."/>
            <person name="Fjellheim S."/>
            <person name="Guda C."/>
            <person name="Jansen R.K."/>
            <person name="Luo H."/>
            <person name="Tomkins J."/>
            <person name="Rognli O.A."/>
            <person name="Daniell H."/>
            <person name="Clarke J.L."/>
        </authorList>
    </citation>
    <scope>NUCLEOTIDE SEQUENCE [LARGE SCALE GENOMIC DNA]</scope>
    <source>
        <strain>cv. Morex</strain>
    </source>
</reference>
<organism>
    <name type="scientific">Hordeum vulgare</name>
    <name type="common">Barley</name>
    <dbReference type="NCBI Taxonomy" id="4513"/>
    <lineage>
        <taxon>Eukaryota</taxon>
        <taxon>Viridiplantae</taxon>
        <taxon>Streptophyta</taxon>
        <taxon>Embryophyta</taxon>
        <taxon>Tracheophyta</taxon>
        <taxon>Spermatophyta</taxon>
        <taxon>Magnoliopsida</taxon>
        <taxon>Liliopsida</taxon>
        <taxon>Poales</taxon>
        <taxon>Poaceae</taxon>
        <taxon>BOP clade</taxon>
        <taxon>Pooideae</taxon>
        <taxon>Triticodae</taxon>
        <taxon>Triticeae</taxon>
        <taxon>Hordeinae</taxon>
        <taxon>Hordeum</taxon>
    </lineage>
</organism>
<keyword id="KW-0007">Acetylation</keyword>
<keyword id="KW-0106">Calcium</keyword>
<keyword id="KW-0148">Chlorophyll</keyword>
<keyword id="KW-0150">Chloroplast</keyword>
<keyword id="KW-0157">Chromophore</keyword>
<keyword id="KW-0249">Electron transport</keyword>
<keyword id="KW-0359">Herbicide resistance</keyword>
<keyword id="KW-0408">Iron</keyword>
<keyword id="KW-0460">Magnesium</keyword>
<keyword id="KW-0464">Manganese</keyword>
<keyword id="KW-0472">Membrane</keyword>
<keyword id="KW-0479">Metal-binding</keyword>
<keyword id="KW-0560">Oxidoreductase</keyword>
<keyword id="KW-0597">Phosphoprotein</keyword>
<keyword id="KW-0602">Photosynthesis</keyword>
<keyword id="KW-0604">Photosystem II</keyword>
<keyword id="KW-0934">Plastid</keyword>
<keyword id="KW-0793">Thylakoid</keyword>
<keyword id="KW-0812">Transmembrane</keyword>
<keyword id="KW-1133">Transmembrane helix</keyword>
<keyword id="KW-0813">Transport</keyword>
<evidence type="ECO:0000255" key="1">
    <source>
        <dbReference type="HAMAP-Rule" id="MF_01379"/>
    </source>
</evidence>
<comment type="function">
    <text evidence="1">Photosystem II (PSII) is a light-driven water:plastoquinone oxidoreductase that uses light energy to abstract electrons from H(2)O, generating O(2) and a proton gradient subsequently used for ATP formation. It consists of a core antenna complex that captures photons, and an electron transfer chain that converts photonic excitation into a charge separation. The D1/D2 (PsbA/PsbD) reaction center heterodimer binds P680, the primary electron donor of PSII as well as several subsequent electron acceptors.</text>
</comment>
<comment type="catalytic activity">
    <reaction evidence="1">
        <text>2 a plastoquinone + 4 hnu + 2 H2O = 2 a plastoquinol + O2</text>
        <dbReference type="Rhea" id="RHEA:36359"/>
        <dbReference type="Rhea" id="RHEA-COMP:9561"/>
        <dbReference type="Rhea" id="RHEA-COMP:9562"/>
        <dbReference type="ChEBI" id="CHEBI:15377"/>
        <dbReference type="ChEBI" id="CHEBI:15379"/>
        <dbReference type="ChEBI" id="CHEBI:17757"/>
        <dbReference type="ChEBI" id="CHEBI:30212"/>
        <dbReference type="ChEBI" id="CHEBI:62192"/>
        <dbReference type="EC" id="1.10.3.9"/>
    </reaction>
</comment>
<comment type="cofactor">
    <text evidence="1">The D1/D2 heterodimer binds P680, chlorophylls that are the primary electron donor of PSII, and subsequent electron acceptors. It shares a non-heme iron and each subunit binds pheophytin, quinone, additional chlorophylls, carotenoids and lipids. D1 provides most of the ligands for the Mn4-Ca-O5 cluster of the oxygen-evolving complex (OEC). There is also a Cl(-1) ion associated with D1 and D2, which is required for oxygen evolution. The PSII complex binds additional chlorophylls, carotenoids and specific lipids.</text>
</comment>
<comment type="subunit">
    <text evidence="1">PSII is composed of 1 copy each of membrane proteins PsbA, PsbB, PsbC, PsbD, PsbE, PsbF, PsbH, PsbI, PsbJ, PsbK, PsbL, PsbM, PsbT, PsbX, PsbY, PsbZ, Psb30/Ycf12, at least 3 peripheral proteins of the oxygen-evolving complex and a large number of cofactors. It forms dimeric complexes.</text>
</comment>
<comment type="subcellular location">
    <subcellularLocation>
        <location evidence="1">Plastid</location>
        <location evidence="1">Chloroplast thylakoid membrane</location>
        <topology evidence="1">Multi-pass membrane protein</topology>
    </subcellularLocation>
</comment>
<comment type="PTM">
    <text evidence="1">Tyr-161 forms a radical intermediate that is referred to as redox-active TyrZ, YZ or Y-Z.</text>
</comment>
<comment type="PTM">
    <text evidence="1">C-terminally processed by CTPA; processing is essential to allow assembly of the oxygen-evolving complex and thus photosynthetic growth.</text>
</comment>
<comment type="miscellaneous">
    <text evidence="1">2 of the reaction center chlorophylls (ChlD1 and ChlD2) are entirely coordinated by water.</text>
</comment>
<comment type="miscellaneous">
    <text evidence="1">Herbicides such as atrazine, BNT, diuron or ioxynil bind in the Q(B) binding site and block subsequent electron transfer.</text>
</comment>
<comment type="similarity">
    <text evidence="1">Belongs to the reaction center PufL/M/PsbA/D family.</text>
</comment>
<geneLocation type="chloroplast"/>